<evidence type="ECO:0000255" key="1">
    <source>
        <dbReference type="PROSITE-ProRule" id="PRU01182"/>
    </source>
</evidence>
<evidence type="ECO:0000305" key="2"/>
<proteinExistence type="inferred from homology"/>
<keyword id="KW-0378">Hydrolase</keyword>
<keyword id="KW-0479">Metal-binding</keyword>
<keyword id="KW-0482">Metalloprotease</keyword>
<keyword id="KW-0645">Protease</keyword>
<keyword id="KW-1185">Reference proteome</keyword>
<keyword id="KW-0862">Zinc</keyword>
<gene>
    <name type="ordered locus">BH3032</name>
</gene>
<comment type="similarity">
    <text evidence="2">Belongs to the UPF0758 family.</text>
</comment>
<protein>
    <recommendedName>
        <fullName>UPF0758 protein BH3032</fullName>
    </recommendedName>
</protein>
<accession>Q9K8H4</accession>
<feature type="chain" id="PRO_0000190681" description="UPF0758 protein BH3032">
    <location>
        <begin position="1"/>
        <end position="232"/>
    </location>
</feature>
<feature type="domain" description="MPN" evidence="1">
    <location>
        <begin position="107"/>
        <end position="229"/>
    </location>
</feature>
<feature type="short sequence motif" description="JAMM motif" evidence="1">
    <location>
        <begin position="178"/>
        <end position="191"/>
    </location>
</feature>
<feature type="binding site" evidence="1">
    <location>
        <position position="178"/>
    </location>
    <ligand>
        <name>Zn(2+)</name>
        <dbReference type="ChEBI" id="CHEBI:29105"/>
        <note>catalytic</note>
    </ligand>
</feature>
<feature type="binding site" evidence="1">
    <location>
        <position position="180"/>
    </location>
    <ligand>
        <name>Zn(2+)</name>
        <dbReference type="ChEBI" id="CHEBI:29105"/>
        <note>catalytic</note>
    </ligand>
</feature>
<feature type="binding site" evidence="1">
    <location>
        <position position="191"/>
    </location>
    <ligand>
        <name>Zn(2+)</name>
        <dbReference type="ChEBI" id="CHEBI:29105"/>
        <note>catalytic</note>
    </ligand>
</feature>
<organism>
    <name type="scientific">Halalkalibacterium halodurans (strain ATCC BAA-125 / DSM 18197 / FERM 7344 / JCM 9153 / C-125)</name>
    <name type="common">Bacillus halodurans</name>
    <dbReference type="NCBI Taxonomy" id="272558"/>
    <lineage>
        <taxon>Bacteria</taxon>
        <taxon>Bacillati</taxon>
        <taxon>Bacillota</taxon>
        <taxon>Bacilli</taxon>
        <taxon>Bacillales</taxon>
        <taxon>Bacillaceae</taxon>
        <taxon>Halalkalibacterium (ex Joshi et al. 2022)</taxon>
    </lineage>
</organism>
<sequence>MSNMSMTLRDVPNRERPRERLLHEGAHALSNQEIVAIMLRTGTKNESVLQLAQHVLCHFDGLRLLREATVEELTSIHGIGEAKAIEFCAAIELGRRIHTMQEMDRYVIRTPEDVSRFVMEEMRFLSQENFVCLYLNTKNQVLHKQTVFIGSLNASIVHPREVFKEALRRSAASLICLHNHPSGDPTPSREDIEVTHRLAQVGKLIGIELLDHVIIGDRTFVSLKEKGHLPFS</sequence>
<dbReference type="EMBL" id="BA000004">
    <property type="protein sequence ID" value="BAB06751.1"/>
    <property type="molecule type" value="Genomic_DNA"/>
</dbReference>
<dbReference type="PIR" id="H84028">
    <property type="entry name" value="H84028"/>
</dbReference>
<dbReference type="SMR" id="Q9K8H4"/>
<dbReference type="STRING" id="272558.gene:10728942"/>
<dbReference type="KEGG" id="bha:BH3032"/>
<dbReference type="eggNOG" id="COG2003">
    <property type="taxonomic scope" value="Bacteria"/>
</dbReference>
<dbReference type="HOGENOM" id="CLU_073529_0_2_9"/>
<dbReference type="Proteomes" id="UP000001258">
    <property type="component" value="Chromosome"/>
</dbReference>
<dbReference type="GO" id="GO:0046872">
    <property type="term" value="F:metal ion binding"/>
    <property type="evidence" value="ECO:0007669"/>
    <property type="project" value="UniProtKB-KW"/>
</dbReference>
<dbReference type="GO" id="GO:0008237">
    <property type="term" value="F:metallopeptidase activity"/>
    <property type="evidence" value="ECO:0007669"/>
    <property type="project" value="UniProtKB-KW"/>
</dbReference>
<dbReference type="GO" id="GO:0006508">
    <property type="term" value="P:proteolysis"/>
    <property type="evidence" value="ECO:0007669"/>
    <property type="project" value="UniProtKB-KW"/>
</dbReference>
<dbReference type="CDD" id="cd08071">
    <property type="entry name" value="MPN_DUF2466"/>
    <property type="match status" value="1"/>
</dbReference>
<dbReference type="Gene3D" id="1.10.150.20">
    <property type="entry name" value="5' to 3' exonuclease, C-terminal subdomain"/>
    <property type="match status" value="1"/>
</dbReference>
<dbReference type="Gene3D" id="3.40.140.10">
    <property type="entry name" value="Cytidine Deaminase, domain 2"/>
    <property type="match status" value="1"/>
</dbReference>
<dbReference type="InterPro" id="IPR037518">
    <property type="entry name" value="MPN"/>
</dbReference>
<dbReference type="InterPro" id="IPR025657">
    <property type="entry name" value="RadC_JAB"/>
</dbReference>
<dbReference type="InterPro" id="IPR010994">
    <property type="entry name" value="RuvA_2-like"/>
</dbReference>
<dbReference type="InterPro" id="IPR001405">
    <property type="entry name" value="UPF0758"/>
</dbReference>
<dbReference type="InterPro" id="IPR020891">
    <property type="entry name" value="UPF0758_CS"/>
</dbReference>
<dbReference type="InterPro" id="IPR046778">
    <property type="entry name" value="UPF0758_N"/>
</dbReference>
<dbReference type="NCBIfam" id="NF000642">
    <property type="entry name" value="PRK00024.1"/>
    <property type="match status" value="1"/>
</dbReference>
<dbReference type="NCBIfam" id="TIGR00608">
    <property type="entry name" value="radc"/>
    <property type="match status" value="1"/>
</dbReference>
<dbReference type="PANTHER" id="PTHR30471">
    <property type="entry name" value="DNA REPAIR PROTEIN RADC"/>
    <property type="match status" value="1"/>
</dbReference>
<dbReference type="PANTHER" id="PTHR30471:SF3">
    <property type="entry name" value="UPF0758 PROTEIN YEES-RELATED"/>
    <property type="match status" value="1"/>
</dbReference>
<dbReference type="Pfam" id="PF04002">
    <property type="entry name" value="RadC"/>
    <property type="match status" value="1"/>
</dbReference>
<dbReference type="Pfam" id="PF20582">
    <property type="entry name" value="UPF0758_N"/>
    <property type="match status" value="1"/>
</dbReference>
<dbReference type="SUPFAM" id="SSF102712">
    <property type="entry name" value="JAB1/MPN domain"/>
    <property type="match status" value="1"/>
</dbReference>
<dbReference type="SUPFAM" id="SSF47781">
    <property type="entry name" value="RuvA domain 2-like"/>
    <property type="match status" value="1"/>
</dbReference>
<dbReference type="PROSITE" id="PS50249">
    <property type="entry name" value="MPN"/>
    <property type="match status" value="1"/>
</dbReference>
<dbReference type="PROSITE" id="PS01302">
    <property type="entry name" value="UPF0758"/>
    <property type="match status" value="1"/>
</dbReference>
<name>Y3032_HALH5</name>
<reference key="1">
    <citation type="journal article" date="2000" name="Nucleic Acids Res.">
        <title>Complete genome sequence of the alkaliphilic bacterium Bacillus halodurans and genomic sequence comparison with Bacillus subtilis.</title>
        <authorList>
            <person name="Takami H."/>
            <person name="Nakasone K."/>
            <person name="Takaki Y."/>
            <person name="Maeno G."/>
            <person name="Sasaki R."/>
            <person name="Masui N."/>
            <person name="Fuji F."/>
            <person name="Hirama C."/>
            <person name="Nakamura Y."/>
            <person name="Ogasawara N."/>
            <person name="Kuhara S."/>
            <person name="Horikoshi K."/>
        </authorList>
    </citation>
    <scope>NUCLEOTIDE SEQUENCE [LARGE SCALE GENOMIC DNA]</scope>
    <source>
        <strain>ATCC BAA-125 / DSM 18197 / FERM 7344 / JCM 9153 / C-125</strain>
    </source>
</reference>